<feature type="chain" id="PRO_1000190402" description="ADP-L-glycero-D-manno-heptose-6-epimerase">
    <location>
        <begin position="1"/>
        <end position="310"/>
    </location>
</feature>
<feature type="active site" description="Proton acceptor" evidence="1">
    <location>
        <position position="140"/>
    </location>
</feature>
<feature type="active site" description="Proton acceptor" evidence="1">
    <location>
        <position position="178"/>
    </location>
</feature>
<feature type="binding site" evidence="1">
    <location>
        <begin position="10"/>
        <end position="11"/>
    </location>
    <ligand>
        <name>NADP(+)</name>
        <dbReference type="ChEBI" id="CHEBI:58349"/>
    </ligand>
</feature>
<feature type="binding site" evidence="1">
    <location>
        <begin position="31"/>
        <end position="32"/>
    </location>
    <ligand>
        <name>NADP(+)</name>
        <dbReference type="ChEBI" id="CHEBI:58349"/>
    </ligand>
</feature>
<feature type="binding site" evidence="1">
    <location>
        <position position="38"/>
    </location>
    <ligand>
        <name>NADP(+)</name>
        <dbReference type="ChEBI" id="CHEBI:58349"/>
    </ligand>
</feature>
<feature type="binding site" evidence="1">
    <location>
        <position position="53"/>
    </location>
    <ligand>
        <name>NADP(+)</name>
        <dbReference type="ChEBI" id="CHEBI:58349"/>
    </ligand>
</feature>
<feature type="binding site" evidence="1">
    <location>
        <begin position="75"/>
        <end position="79"/>
    </location>
    <ligand>
        <name>NADP(+)</name>
        <dbReference type="ChEBI" id="CHEBI:58349"/>
    </ligand>
</feature>
<feature type="binding site" evidence="1">
    <location>
        <position position="92"/>
    </location>
    <ligand>
        <name>NADP(+)</name>
        <dbReference type="ChEBI" id="CHEBI:58349"/>
    </ligand>
</feature>
<feature type="binding site" evidence="1">
    <location>
        <position position="144"/>
    </location>
    <ligand>
        <name>NADP(+)</name>
        <dbReference type="ChEBI" id="CHEBI:58349"/>
    </ligand>
</feature>
<feature type="binding site" evidence="1">
    <location>
        <position position="169"/>
    </location>
    <ligand>
        <name>substrate</name>
    </ligand>
</feature>
<feature type="binding site" evidence="1">
    <location>
        <position position="170"/>
    </location>
    <ligand>
        <name>NADP(+)</name>
        <dbReference type="ChEBI" id="CHEBI:58349"/>
    </ligand>
</feature>
<feature type="binding site" evidence="1">
    <location>
        <position position="178"/>
    </location>
    <ligand>
        <name>NADP(+)</name>
        <dbReference type="ChEBI" id="CHEBI:58349"/>
    </ligand>
</feature>
<feature type="binding site" evidence="1">
    <location>
        <position position="180"/>
    </location>
    <ligand>
        <name>substrate</name>
    </ligand>
</feature>
<feature type="binding site" evidence="1">
    <location>
        <position position="187"/>
    </location>
    <ligand>
        <name>substrate</name>
    </ligand>
</feature>
<feature type="binding site" evidence="1">
    <location>
        <begin position="201"/>
        <end position="204"/>
    </location>
    <ligand>
        <name>substrate</name>
    </ligand>
</feature>
<feature type="binding site" evidence="1">
    <location>
        <position position="209"/>
    </location>
    <ligand>
        <name>substrate</name>
    </ligand>
</feature>
<feature type="binding site" evidence="1">
    <location>
        <position position="272"/>
    </location>
    <ligand>
        <name>substrate</name>
    </ligand>
</feature>
<feature type="modified residue" description="N6-acetyllysine" evidence="1">
    <location>
        <position position="267"/>
    </location>
</feature>
<keyword id="KW-0007">Acetylation</keyword>
<keyword id="KW-0119">Carbohydrate metabolism</keyword>
<keyword id="KW-0413">Isomerase</keyword>
<keyword id="KW-0521">NADP</keyword>
<gene>
    <name evidence="1" type="primary">hldD</name>
    <name type="ordered locus">ECDH10B_3801</name>
</gene>
<protein>
    <recommendedName>
        <fullName evidence="1">ADP-L-glycero-D-manno-heptose-6-epimerase</fullName>
        <ecNumber evidence="1">5.1.3.20</ecNumber>
    </recommendedName>
    <alternativeName>
        <fullName evidence="1">ADP-L-glycero-beta-D-manno-heptose-6-epimerase</fullName>
        <shortName evidence="1">ADP-glyceromanno-heptose 6-epimerase</shortName>
        <shortName evidence="1">ADP-hep 6-epimerase</shortName>
        <shortName evidence="1">AGME</shortName>
    </alternativeName>
</protein>
<dbReference type="EC" id="5.1.3.20" evidence="1"/>
<dbReference type="EMBL" id="CP000948">
    <property type="protein sequence ID" value="ACB04669.1"/>
    <property type="molecule type" value="Genomic_DNA"/>
</dbReference>
<dbReference type="SMR" id="B1X953"/>
<dbReference type="KEGG" id="ecd:ECDH10B_3801"/>
<dbReference type="HOGENOM" id="CLU_007383_1_3_6"/>
<dbReference type="UniPathway" id="UPA00356">
    <property type="reaction ID" value="UER00440"/>
</dbReference>
<dbReference type="GO" id="GO:0008712">
    <property type="term" value="F:ADP-glyceromanno-heptose 6-epimerase activity"/>
    <property type="evidence" value="ECO:0007669"/>
    <property type="project" value="UniProtKB-UniRule"/>
</dbReference>
<dbReference type="GO" id="GO:0050661">
    <property type="term" value="F:NADP binding"/>
    <property type="evidence" value="ECO:0007669"/>
    <property type="project" value="InterPro"/>
</dbReference>
<dbReference type="GO" id="GO:0097171">
    <property type="term" value="P:ADP-L-glycero-beta-D-manno-heptose biosynthetic process"/>
    <property type="evidence" value="ECO:0007669"/>
    <property type="project" value="UniProtKB-UniPathway"/>
</dbReference>
<dbReference type="GO" id="GO:0005975">
    <property type="term" value="P:carbohydrate metabolic process"/>
    <property type="evidence" value="ECO:0007669"/>
    <property type="project" value="UniProtKB-UniRule"/>
</dbReference>
<dbReference type="CDD" id="cd05248">
    <property type="entry name" value="ADP_GME_SDR_e"/>
    <property type="match status" value="1"/>
</dbReference>
<dbReference type="Gene3D" id="3.40.50.720">
    <property type="entry name" value="NAD(P)-binding Rossmann-like Domain"/>
    <property type="match status" value="1"/>
</dbReference>
<dbReference type="Gene3D" id="3.90.25.10">
    <property type="entry name" value="UDP-galactose 4-epimerase, domain 1"/>
    <property type="match status" value="1"/>
</dbReference>
<dbReference type="HAMAP" id="MF_01601">
    <property type="entry name" value="Heptose_epimerase"/>
    <property type="match status" value="1"/>
</dbReference>
<dbReference type="InterPro" id="IPR001509">
    <property type="entry name" value="Epimerase_deHydtase"/>
</dbReference>
<dbReference type="InterPro" id="IPR011912">
    <property type="entry name" value="Heptose_epim"/>
</dbReference>
<dbReference type="InterPro" id="IPR036291">
    <property type="entry name" value="NAD(P)-bd_dom_sf"/>
</dbReference>
<dbReference type="NCBIfam" id="TIGR02197">
    <property type="entry name" value="heptose_epim"/>
    <property type="match status" value="1"/>
</dbReference>
<dbReference type="NCBIfam" id="NF008360">
    <property type="entry name" value="PRK11150.1"/>
    <property type="match status" value="1"/>
</dbReference>
<dbReference type="PANTHER" id="PTHR43103:SF3">
    <property type="entry name" value="ADP-L-GLYCERO-D-MANNO-HEPTOSE-6-EPIMERASE"/>
    <property type="match status" value="1"/>
</dbReference>
<dbReference type="PANTHER" id="PTHR43103">
    <property type="entry name" value="NUCLEOSIDE-DIPHOSPHATE-SUGAR EPIMERASE"/>
    <property type="match status" value="1"/>
</dbReference>
<dbReference type="Pfam" id="PF01370">
    <property type="entry name" value="Epimerase"/>
    <property type="match status" value="1"/>
</dbReference>
<dbReference type="SUPFAM" id="SSF51735">
    <property type="entry name" value="NAD(P)-binding Rossmann-fold domains"/>
    <property type="match status" value="1"/>
</dbReference>
<name>HLDD_ECODH</name>
<accession>B1X953</accession>
<sequence>MIIVTGGAGFIGSNIVKALNDKGITDILVVDNLKDGTKFVNLVDLNIADYMDKEDFLIQIMAGEEFGDVEAIFHEGACSSTTEWDGKYMMDNNYQYSKELLHYCLEREIPFLYASSAATYGGRTSDFIESREYEKPLNVYGYSKFLFDEYVRQILPEANSQIVGFRYFNVYGPREGHKGSMASVAFHLNTQLNNGESPKLFEGSENFKRDFVYVGDVADVNLWFLENGVSGIFNLGTGRAESFQAVADATLAYHKKGQIEYIPFPDKLKGRYQAFTQADLTNLRAAGYDKPFKTVAEGVTEYMAWLNRDA</sequence>
<proteinExistence type="inferred from homology"/>
<evidence type="ECO:0000255" key="1">
    <source>
        <dbReference type="HAMAP-Rule" id="MF_01601"/>
    </source>
</evidence>
<organism>
    <name type="scientific">Escherichia coli (strain K12 / DH10B)</name>
    <dbReference type="NCBI Taxonomy" id="316385"/>
    <lineage>
        <taxon>Bacteria</taxon>
        <taxon>Pseudomonadati</taxon>
        <taxon>Pseudomonadota</taxon>
        <taxon>Gammaproteobacteria</taxon>
        <taxon>Enterobacterales</taxon>
        <taxon>Enterobacteriaceae</taxon>
        <taxon>Escherichia</taxon>
    </lineage>
</organism>
<reference key="1">
    <citation type="journal article" date="2008" name="J. Bacteriol.">
        <title>The complete genome sequence of Escherichia coli DH10B: insights into the biology of a laboratory workhorse.</title>
        <authorList>
            <person name="Durfee T."/>
            <person name="Nelson R."/>
            <person name="Baldwin S."/>
            <person name="Plunkett G. III"/>
            <person name="Burland V."/>
            <person name="Mau B."/>
            <person name="Petrosino J.F."/>
            <person name="Qin X."/>
            <person name="Muzny D.M."/>
            <person name="Ayele M."/>
            <person name="Gibbs R.A."/>
            <person name="Csorgo B."/>
            <person name="Posfai G."/>
            <person name="Weinstock G.M."/>
            <person name="Blattner F.R."/>
        </authorList>
    </citation>
    <scope>NUCLEOTIDE SEQUENCE [LARGE SCALE GENOMIC DNA]</scope>
    <source>
        <strain>K12 / DH10B</strain>
    </source>
</reference>
<comment type="function">
    <text evidence="1">Catalyzes the interconversion between ADP-D-glycero-beta-D-manno-heptose and ADP-L-glycero-beta-D-manno-heptose via an epimerization at carbon 6 of the heptose.</text>
</comment>
<comment type="catalytic activity">
    <reaction evidence="1">
        <text>ADP-D-glycero-beta-D-manno-heptose = ADP-L-glycero-beta-D-manno-heptose</text>
        <dbReference type="Rhea" id="RHEA:17577"/>
        <dbReference type="ChEBI" id="CHEBI:59967"/>
        <dbReference type="ChEBI" id="CHEBI:61506"/>
        <dbReference type="EC" id="5.1.3.20"/>
    </reaction>
</comment>
<comment type="cofactor">
    <cofactor evidence="1">
        <name>NADP(+)</name>
        <dbReference type="ChEBI" id="CHEBI:58349"/>
    </cofactor>
    <text evidence="1">Binds 1 NADP(+) per subunit.</text>
</comment>
<comment type="pathway">
    <text evidence="1">Nucleotide-sugar biosynthesis; ADP-L-glycero-beta-D-manno-heptose biosynthesis; ADP-L-glycero-beta-D-manno-heptose from D-glycero-beta-D-manno-heptose 7-phosphate: step 4/4.</text>
</comment>
<comment type="subunit">
    <text evidence="1">Homopentamer.</text>
</comment>
<comment type="domain">
    <text evidence="1">Contains a large N-terminal NADP-binding domain, and a smaller C-terminal substrate-binding domain.</text>
</comment>
<comment type="similarity">
    <text evidence="1">Belongs to the NAD(P)-dependent epimerase/dehydratase family. HldD subfamily.</text>
</comment>